<reference key="1">
    <citation type="submission" date="2008-10" db="EMBL/GenBank/DDBJ databases">
        <title>Genome sequence of Bacillus anthracis str. CDC 684.</title>
        <authorList>
            <person name="Dodson R.J."/>
            <person name="Munk A.C."/>
            <person name="Brettin T."/>
            <person name="Bruce D."/>
            <person name="Detter C."/>
            <person name="Tapia R."/>
            <person name="Han C."/>
            <person name="Sutton G."/>
            <person name="Sims D."/>
        </authorList>
    </citation>
    <scope>NUCLEOTIDE SEQUENCE [LARGE SCALE GENOMIC DNA]</scope>
    <source>
        <strain>CDC 684 / NRRL 3495</strain>
    </source>
</reference>
<organism>
    <name type="scientific">Bacillus anthracis (strain CDC 684 / NRRL 3495)</name>
    <dbReference type="NCBI Taxonomy" id="568206"/>
    <lineage>
        <taxon>Bacteria</taxon>
        <taxon>Bacillati</taxon>
        <taxon>Bacillota</taxon>
        <taxon>Bacilli</taxon>
        <taxon>Bacillales</taxon>
        <taxon>Bacillaceae</taxon>
        <taxon>Bacillus</taxon>
        <taxon>Bacillus cereus group</taxon>
    </lineage>
</organism>
<evidence type="ECO:0000255" key="1">
    <source>
        <dbReference type="HAMAP-Rule" id="MF_00101"/>
    </source>
</evidence>
<comment type="function">
    <text evidence="1">Transfers the 4'-phosphopantetheine moiety from coenzyme A to a Ser of acyl-carrier-protein.</text>
</comment>
<comment type="catalytic activity">
    <reaction evidence="1">
        <text>apo-[ACP] + CoA = holo-[ACP] + adenosine 3',5'-bisphosphate + H(+)</text>
        <dbReference type="Rhea" id="RHEA:12068"/>
        <dbReference type="Rhea" id="RHEA-COMP:9685"/>
        <dbReference type="Rhea" id="RHEA-COMP:9690"/>
        <dbReference type="ChEBI" id="CHEBI:15378"/>
        <dbReference type="ChEBI" id="CHEBI:29999"/>
        <dbReference type="ChEBI" id="CHEBI:57287"/>
        <dbReference type="ChEBI" id="CHEBI:58343"/>
        <dbReference type="ChEBI" id="CHEBI:64479"/>
        <dbReference type="EC" id="2.7.8.7"/>
    </reaction>
</comment>
<comment type="cofactor">
    <cofactor evidence="1">
        <name>Mg(2+)</name>
        <dbReference type="ChEBI" id="CHEBI:18420"/>
    </cofactor>
</comment>
<comment type="subcellular location">
    <subcellularLocation>
        <location evidence="1">Cytoplasm</location>
    </subcellularLocation>
</comment>
<comment type="similarity">
    <text evidence="1">Belongs to the P-Pant transferase superfamily. AcpS family.</text>
</comment>
<dbReference type="EC" id="2.7.8.7" evidence="1"/>
<dbReference type="EMBL" id="CP001215">
    <property type="protein sequence ID" value="ACP17285.1"/>
    <property type="molecule type" value="Genomic_DNA"/>
</dbReference>
<dbReference type="RefSeq" id="WP_000635040.1">
    <property type="nucleotide sequence ID" value="NC_012581.1"/>
</dbReference>
<dbReference type="SMR" id="C3LK79"/>
<dbReference type="GeneID" id="45020288"/>
<dbReference type="KEGG" id="bah:BAMEG_0279"/>
<dbReference type="HOGENOM" id="CLU_089696_1_2_9"/>
<dbReference type="GO" id="GO:0005829">
    <property type="term" value="C:cytosol"/>
    <property type="evidence" value="ECO:0007669"/>
    <property type="project" value="TreeGrafter"/>
</dbReference>
<dbReference type="GO" id="GO:0008897">
    <property type="term" value="F:holo-[acyl-carrier-protein] synthase activity"/>
    <property type="evidence" value="ECO:0007669"/>
    <property type="project" value="UniProtKB-UniRule"/>
</dbReference>
<dbReference type="GO" id="GO:0000287">
    <property type="term" value="F:magnesium ion binding"/>
    <property type="evidence" value="ECO:0007669"/>
    <property type="project" value="UniProtKB-UniRule"/>
</dbReference>
<dbReference type="GO" id="GO:0006633">
    <property type="term" value="P:fatty acid biosynthetic process"/>
    <property type="evidence" value="ECO:0007669"/>
    <property type="project" value="UniProtKB-UniRule"/>
</dbReference>
<dbReference type="GO" id="GO:0019878">
    <property type="term" value="P:lysine biosynthetic process via aminoadipic acid"/>
    <property type="evidence" value="ECO:0007669"/>
    <property type="project" value="TreeGrafter"/>
</dbReference>
<dbReference type="Gene3D" id="3.90.470.20">
    <property type="entry name" value="4'-phosphopantetheinyl transferase domain"/>
    <property type="match status" value="1"/>
</dbReference>
<dbReference type="HAMAP" id="MF_00101">
    <property type="entry name" value="AcpS"/>
    <property type="match status" value="1"/>
</dbReference>
<dbReference type="InterPro" id="IPR008278">
    <property type="entry name" value="4-PPantetheinyl_Trfase_dom"/>
</dbReference>
<dbReference type="InterPro" id="IPR037143">
    <property type="entry name" value="4-PPantetheinyl_Trfase_dom_sf"/>
</dbReference>
<dbReference type="InterPro" id="IPR002582">
    <property type="entry name" value="ACPS"/>
</dbReference>
<dbReference type="InterPro" id="IPR050559">
    <property type="entry name" value="P-Pant_transferase_sf"/>
</dbReference>
<dbReference type="InterPro" id="IPR004568">
    <property type="entry name" value="Ppantetheine-prot_Trfase_dom"/>
</dbReference>
<dbReference type="NCBIfam" id="TIGR00516">
    <property type="entry name" value="acpS"/>
    <property type="match status" value="1"/>
</dbReference>
<dbReference type="NCBIfam" id="TIGR00556">
    <property type="entry name" value="pantethn_trn"/>
    <property type="match status" value="1"/>
</dbReference>
<dbReference type="PANTHER" id="PTHR12215:SF10">
    <property type="entry name" value="L-AMINOADIPATE-SEMIALDEHYDE DEHYDROGENASE-PHOSPHOPANTETHEINYL TRANSFERASE"/>
    <property type="match status" value="1"/>
</dbReference>
<dbReference type="PANTHER" id="PTHR12215">
    <property type="entry name" value="PHOSPHOPANTETHEINE TRANSFERASE"/>
    <property type="match status" value="1"/>
</dbReference>
<dbReference type="Pfam" id="PF01648">
    <property type="entry name" value="ACPS"/>
    <property type="match status" value="1"/>
</dbReference>
<dbReference type="SUPFAM" id="SSF56214">
    <property type="entry name" value="4'-phosphopantetheinyl transferase"/>
    <property type="match status" value="1"/>
</dbReference>
<accession>C3LK79</accession>
<feature type="chain" id="PRO_1000118791" description="Holo-[acyl-carrier-protein] synthase">
    <location>
        <begin position="1"/>
        <end position="119"/>
    </location>
</feature>
<feature type="binding site" evidence="1">
    <location>
        <position position="8"/>
    </location>
    <ligand>
        <name>Mg(2+)</name>
        <dbReference type="ChEBI" id="CHEBI:18420"/>
    </ligand>
</feature>
<feature type="binding site" evidence="1">
    <location>
        <position position="58"/>
    </location>
    <ligand>
        <name>Mg(2+)</name>
        <dbReference type="ChEBI" id="CHEBI:18420"/>
    </ligand>
</feature>
<keyword id="KW-0963">Cytoplasm</keyword>
<keyword id="KW-0275">Fatty acid biosynthesis</keyword>
<keyword id="KW-0276">Fatty acid metabolism</keyword>
<keyword id="KW-0444">Lipid biosynthesis</keyword>
<keyword id="KW-0443">Lipid metabolism</keyword>
<keyword id="KW-0460">Magnesium</keyword>
<keyword id="KW-0479">Metal-binding</keyword>
<keyword id="KW-0808">Transferase</keyword>
<sequence length="119" mass="13100">MIVGIGIDIIELNRIEKMLDGKLKFMERILTENERNVAKGLKGSRLTEFVAGRFAAKEAYSKAVGTGIGKEVSFLDIEVRNDDRGKPILITSTEHIVHLSISHSKEFAVAQVVLESSSS</sequence>
<gene>
    <name evidence="1" type="primary">acpS</name>
    <name type="ordered locus">BAMEG_0279</name>
</gene>
<proteinExistence type="inferred from homology"/>
<protein>
    <recommendedName>
        <fullName evidence="1">Holo-[acyl-carrier-protein] synthase</fullName>
        <shortName evidence="1">Holo-ACP synthase</shortName>
        <ecNumber evidence="1">2.7.8.7</ecNumber>
    </recommendedName>
    <alternativeName>
        <fullName evidence="1">4'-phosphopantetheinyl transferase AcpS</fullName>
    </alternativeName>
</protein>
<name>ACPS_BACAC</name>